<reference key="1">
    <citation type="submission" date="2006-09" db="EMBL/GenBank/DDBJ databases">
        <authorList>
            <consortium name="NIH - Mammalian Gene Collection (MGC) project"/>
        </authorList>
    </citation>
    <scope>NUCLEOTIDE SEQUENCE [LARGE SCALE MRNA]</scope>
    <source>
        <strain>Hereford</strain>
        <tissue>Thalamus</tissue>
    </source>
</reference>
<keyword id="KW-0007">Acetylation</keyword>
<keyword id="KW-0131">Cell cycle</keyword>
<keyword id="KW-0132">Cell division</keyword>
<keyword id="KW-0156">Chromatin regulator</keyword>
<keyword id="KW-0963">Cytoplasm</keyword>
<keyword id="KW-0227">DNA damage</keyword>
<keyword id="KW-0234">DNA repair</keyword>
<keyword id="KW-0498">Mitosis</keyword>
<keyword id="KW-0539">Nucleus</keyword>
<keyword id="KW-0597">Phosphoprotein</keyword>
<keyword id="KW-1185">Reference proteome</keyword>
<keyword id="KW-0833">Ubl conjugation pathway</keyword>
<proteinExistence type="evidence at transcript level"/>
<protein>
    <recommendedName>
        <fullName>BRISC and BRCA1-A complex member 1</fullName>
    </recommendedName>
    <alternativeName>
        <fullName>Mediator of RAP80 interactions and targeting subunit of 40 kDa</fullName>
    </alternativeName>
    <alternativeName>
        <fullName>New component of the BRCA1-A complex</fullName>
    </alternativeName>
</protein>
<sequence>MEVAEPSCPTEEEEEEEEEEEQSAEPRPRTRSNPEGAEDRALGAQTSVGSRSEGEGEAASADDGTANPPGAGPKPWQVPPPAPEVQVRTPRVNCPEKVIICLDLSEEMALPKLESFNGSKTNALNVSQKMIEMFVRTKHKIDKSHEFALVVVNDDTAWLSGLTSDPRELCSCLYDLETASCSTFNLEGLFSLIQQKTELPVTENVQTIPPPYVVRTILVYSRPPCQPQFSLTEPMKKMFQCPYFFFDVVYIHNGADEKEEEMSWKDMFAFMGSLDTKGTSYKYEVALAGPALELHNCMAKLLAHPLQRPCQSHASYSLLEEDDEATEVEATV</sequence>
<accession>Q08E57</accession>
<evidence type="ECO:0000250" key="1">
    <source>
        <dbReference type="UniProtKB" id="Q9NWV8"/>
    </source>
</evidence>
<evidence type="ECO:0000256" key="2">
    <source>
        <dbReference type="SAM" id="MobiDB-lite"/>
    </source>
</evidence>
<evidence type="ECO:0000305" key="3"/>
<dbReference type="EMBL" id="BC123408">
    <property type="protein sequence ID" value="AAI23409.1"/>
    <property type="molecule type" value="mRNA"/>
</dbReference>
<dbReference type="RefSeq" id="NP_001070269.1">
    <property type="nucleotide sequence ID" value="NM_001076801.1"/>
</dbReference>
<dbReference type="RefSeq" id="XP_005208543.1">
    <property type="nucleotide sequence ID" value="XM_005208486.5"/>
</dbReference>
<dbReference type="RefSeq" id="XP_005208544.1">
    <property type="nucleotide sequence ID" value="XM_005208487.5"/>
</dbReference>
<dbReference type="SMR" id="Q08E57"/>
<dbReference type="FunCoup" id="Q08E57">
    <property type="interactions" value="3761"/>
</dbReference>
<dbReference type="STRING" id="9913.ENSBTAP00000058698"/>
<dbReference type="PaxDb" id="9913-ENSBTAP00000044652"/>
<dbReference type="GeneID" id="504517"/>
<dbReference type="KEGG" id="bta:504517"/>
<dbReference type="CTD" id="29086"/>
<dbReference type="VEuPathDB" id="HostDB:ENSBTAG00000012587"/>
<dbReference type="eggNOG" id="ENOG502QPZP">
    <property type="taxonomic scope" value="Eukaryota"/>
</dbReference>
<dbReference type="HOGENOM" id="CLU_077295_0_0_1"/>
<dbReference type="InParanoid" id="Q08E57"/>
<dbReference type="OMA" id="SCTTAWP"/>
<dbReference type="OrthoDB" id="547311at2759"/>
<dbReference type="TreeFam" id="TF329070"/>
<dbReference type="Reactome" id="R-BTA-5689901">
    <property type="pathway name" value="Metalloprotease DUBs"/>
</dbReference>
<dbReference type="Reactome" id="R-BTA-5693565">
    <property type="pathway name" value="Recruitment and ATM-mediated phosphorylation of repair and signaling proteins at DNA double strand breaks"/>
</dbReference>
<dbReference type="Reactome" id="R-BTA-5693571">
    <property type="pathway name" value="Nonhomologous End-Joining (NHEJ)"/>
</dbReference>
<dbReference type="Reactome" id="R-BTA-5693607">
    <property type="pathway name" value="Processing of DNA double-strand break ends"/>
</dbReference>
<dbReference type="Reactome" id="R-BTA-69473">
    <property type="pathway name" value="G2/M DNA damage checkpoint"/>
</dbReference>
<dbReference type="Proteomes" id="UP000009136">
    <property type="component" value="Chromosome 7"/>
</dbReference>
<dbReference type="Bgee" id="ENSBTAG00000012587">
    <property type="expression patterns" value="Expressed in retina and 106 other cell types or tissues"/>
</dbReference>
<dbReference type="GO" id="GO:0070531">
    <property type="term" value="C:BRCA1-A complex"/>
    <property type="evidence" value="ECO:0000250"/>
    <property type="project" value="UniProtKB"/>
</dbReference>
<dbReference type="GO" id="GO:0070552">
    <property type="term" value="C:BRISC complex"/>
    <property type="evidence" value="ECO:0000250"/>
    <property type="project" value="UniProtKB"/>
</dbReference>
<dbReference type="GO" id="GO:0005737">
    <property type="term" value="C:cytoplasm"/>
    <property type="evidence" value="ECO:0000250"/>
    <property type="project" value="UniProtKB"/>
</dbReference>
<dbReference type="GO" id="GO:0016604">
    <property type="term" value="C:nuclear body"/>
    <property type="evidence" value="ECO:0000318"/>
    <property type="project" value="GO_Central"/>
</dbReference>
<dbReference type="GO" id="GO:0005634">
    <property type="term" value="C:nucleus"/>
    <property type="evidence" value="ECO:0000250"/>
    <property type="project" value="UniProtKB"/>
</dbReference>
<dbReference type="GO" id="GO:0051301">
    <property type="term" value="P:cell division"/>
    <property type="evidence" value="ECO:0007669"/>
    <property type="project" value="UniProtKB-KW"/>
</dbReference>
<dbReference type="GO" id="GO:0140861">
    <property type="term" value="P:DNA repair-dependent chromatin remodeling"/>
    <property type="evidence" value="ECO:0000250"/>
    <property type="project" value="UniProtKB"/>
</dbReference>
<dbReference type="GO" id="GO:0006302">
    <property type="term" value="P:double-strand break repair"/>
    <property type="evidence" value="ECO:0000250"/>
    <property type="project" value="UniProtKB"/>
</dbReference>
<dbReference type="GO" id="GO:0007095">
    <property type="term" value="P:mitotic G2 DNA damage checkpoint signaling"/>
    <property type="evidence" value="ECO:0000250"/>
    <property type="project" value="UniProtKB"/>
</dbReference>
<dbReference type="GO" id="GO:0045739">
    <property type="term" value="P:positive regulation of DNA repair"/>
    <property type="evidence" value="ECO:0000250"/>
    <property type="project" value="UniProtKB"/>
</dbReference>
<dbReference type="GO" id="GO:0010212">
    <property type="term" value="P:response to ionizing radiation"/>
    <property type="evidence" value="ECO:0000250"/>
    <property type="project" value="UniProtKB"/>
</dbReference>
<dbReference type="CDD" id="cd21502">
    <property type="entry name" value="vWA_BABAM1"/>
    <property type="match status" value="1"/>
</dbReference>
<dbReference type="Gene3D" id="3.40.50.410">
    <property type="entry name" value="von Willebrand factor, type A domain"/>
    <property type="match status" value="1"/>
</dbReference>
<dbReference type="InterPro" id="IPR026126">
    <property type="entry name" value="BABAM1"/>
</dbReference>
<dbReference type="InterPro" id="IPR036465">
    <property type="entry name" value="vWFA_dom_sf"/>
</dbReference>
<dbReference type="PANTHER" id="PTHR15660">
    <property type="entry name" value="BRISC AND BRCA1-A COMPLEX MEMBER 1"/>
    <property type="match status" value="1"/>
</dbReference>
<dbReference type="PANTHER" id="PTHR15660:SF1">
    <property type="entry name" value="BRISC AND BRCA1-A COMPLEX MEMBER 1"/>
    <property type="match status" value="1"/>
</dbReference>
<dbReference type="SUPFAM" id="SSF53300">
    <property type="entry name" value="vWA-like"/>
    <property type="match status" value="1"/>
</dbReference>
<feature type="chain" id="PRO_0000288457" description="BRISC and BRCA1-A complex member 1">
    <location>
        <begin position="1"/>
        <end position="332"/>
    </location>
</feature>
<feature type="region of interest" description="Disordered" evidence="2">
    <location>
        <begin position="1"/>
        <end position="88"/>
    </location>
</feature>
<feature type="region of interest" description="VWFA-like">
    <location>
        <begin position="98"/>
        <end position="301"/>
    </location>
</feature>
<feature type="compositionally biased region" description="Acidic residues" evidence="2">
    <location>
        <begin position="10"/>
        <end position="23"/>
    </location>
</feature>
<feature type="compositionally biased region" description="Pro residues" evidence="2">
    <location>
        <begin position="70"/>
        <end position="83"/>
    </location>
</feature>
<feature type="modified residue" description="N-acetylmethionine" evidence="1">
    <location>
        <position position="1"/>
    </location>
</feature>
<feature type="modified residue" description="Phosphoserine" evidence="1">
    <location>
        <position position="32"/>
    </location>
</feature>
<feature type="modified residue" description="Phosphoserine" evidence="1">
    <location>
        <position position="52"/>
    </location>
</feature>
<feature type="modified residue" description="Phosphoserine" evidence="1">
    <location>
        <position position="60"/>
    </location>
</feature>
<gene>
    <name type="primary">BABAM1</name>
    <name type="synonym">MERIT40</name>
    <name type="synonym">NBA1</name>
</gene>
<comment type="function">
    <text evidence="1">Component of the BRCA1-A complex, a complex that specifically recognizes 'Lys-63'-linked ubiquitinated histones H2A and H2AX at DNA lesions sites, leading to target the BRCA1-BARD1 heterodimer to sites of DNA damage at double-strand breaks (DSBs). The BRCA1-A complex also possesses deubiquitinase activity that specifically removes 'Lys-63'-linked ubiquitin on histones H2A and H2AX. In the BRCA1-A complex, it is required for the complex integrity and its localization at DSBs. Component of the BRISC complex, a multiprotein complex that specifically cleaves 'Lys-63'-linked ubiquitin in various substrates. In these 2 complexes, it is probably required to maintain the stability of BABAM2 and help the 'Lys-63'-linked deubiquitinase activity mediated by BRCC3/BRCC36 component. The BRISC complex is required for normal mitotic spindle assembly and microtubule attachment to kinetochores via its role in deubiquitinating NUMA1. Plays a role in interferon signaling via its role in the deubiquitination of the interferon receptor IFNAR1; deubiquitination increases IFNAR1 activity by enhancing its stability and cell surface expression. Down-regulates the response to bacterial lipopolysaccharide (LPS) via its role in IFNAR1 deubiquitination.</text>
</comment>
<comment type="subunit">
    <text evidence="1">Component of the ARISC complex, at least composed of UIMC1/RAP80, ABRAXAS1, BRCC3/BRCC36, BABAM2 and BABAM1/NBA1. Component of the BRCA1-A complex, at least composed of BRCA1, BARD1, UIMC1/RAP80, ABRAXAS1, BRCC3/BRCC36, BABAM2 and BABAM1/NBA1. In the BRCA1-A complex, interacts directly with ABRAXAS1 and BABAM2. Component of the BRISC complex, at least composed of ABRAXAS2, BRCC3/BRCC36, BABAM2 and BABAM1/NBA1. Identified in a complex with SHMT2 and the other subunits of the BRISC complex.</text>
</comment>
<comment type="subcellular location">
    <subcellularLocation>
        <location evidence="1">Cytoplasm</location>
    </subcellularLocation>
    <subcellularLocation>
        <location evidence="1">Nucleus</location>
    </subcellularLocation>
    <text evidence="1">Localizes at sites of DNA damage at double-strand breaks (DSBs).</text>
</comment>
<comment type="domain">
    <text evidence="1">The VWFA-like region is similar to the VWFA domain. Its presence reveals similarities between the structure of the 19S proteasome and the BRCA1-A complexes.</text>
</comment>
<comment type="similarity">
    <text evidence="3">Belongs to the BABAM1 family.</text>
</comment>
<organism>
    <name type="scientific">Bos taurus</name>
    <name type="common">Bovine</name>
    <dbReference type="NCBI Taxonomy" id="9913"/>
    <lineage>
        <taxon>Eukaryota</taxon>
        <taxon>Metazoa</taxon>
        <taxon>Chordata</taxon>
        <taxon>Craniata</taxon>
        <taxon>Vertebrata</taxon>
        <taxon>Euteleostomi</taxon>
        <taxon>Mammalia</taxon>
        <taxon>Eutheria</taxon>
        <taxon>Laurasiatheria</taxon>
        <taxon>Artiodactyla</taxon>
        <taxon>Ruminantia</taxon>
        <taxon>Pecora</taxon>
        <taxon>Bovidae</taxon>
        <taxon>Bovinae</taxon>
        <taxon>Bos</taxon>
    </lineage>
</organism>
<name>BABA1_BOVIN</name>